<feature type="chain" id="PRO_0000133343" description="Protein E6">
    <location>
        <begin position="1"/>
        <end position="157"/>
    </location>
</feature>
<feature type="zinc finger region" evidence="1">
    <location>
        <begin position="43"/>
        <end position="80"/>
    </location>
</feature>
<feature type="zinc finger region" evidence="1">
    <location>
        <begin position="117"/>
        <end position="153"/>
    </location>
</feature>
<organism>
    <name type="scientific">Human papillomavirus 23</name>
    <dbReference type="NCBI Taxonomy" id="37955"/>
    <lineage>
        <taxon>Viruses</taxon>
        <taxon>Monodnaviria</taxon>
        <taxon>Shotokuvirae</taxon>
        <taxon>Cossaviricota</taxon>
        <taxon>Papovaviricetes</taxon>
        <taxon>Zurhausenvirales</taxon>
        <taxon>Papillomaviridae</taxon>
        <taxon>Firstpapillomavirinae</taxon>
        <taxon>Betapapillomavirus</taxon>
        <taxon>Betapapillomavirus 2</taxon>
    </lineage>
</organism>
<sequence>MQTVHYLSRMCYTKLLMDSTRPLTVQQLSDKLTVPVVDLLLPCRFCSRFLTYLELREFDYKHLQLIWTEEDFVFACCSGCAYASAQFEIQQFYQLTVYGREIEQEEQRPIGQICIRCQYCLKSLDLIEKLDICSFNQPFHKVRNHWKGRCRHCKEIE</sequence>
<accession>P50776</accession>
<protein>
    <recommendedName>
        <fullName evidence="1">Protein E6</fullName>
    </recommendedName>
</protein>
<comment type="function">
    <text evidence="1">Plays a major role in the induction and maintenance of cellular transformation. E6 associates with host UBE3A/E6-AP ubiquitin-protein ligase and modulates its activity. Protects host keratinocytes from apoptosis by mediating the degradation of host BAK1. May also inhibit host immune response.</text>
</comment>
<comment type="subunit">
    <text evidence="1">Forms homodimers. Interacts with ubiquitin-protein ligase UBE3A/E6-AP; this interaction stimulates UBE3A ubiquitin activity. Interacts with host BAK1.</text>
</comment>
<comment type="subcellular location">
    <subcellularLocation>
        <location evidence="1">Host cytoplasm</location>
    </subcellularLocation>
    <subcellularLocation>
        <location evidence="1">Host nucleus</location>
    </subcellularLocation>
</comment>
<comment type="similarity">
    <text evidence="1 2">Belongs to the papillomaviridae E6 protein family.</text>
</comment>
<dbReference type="EMBL" id="U31781">
    <property type="protein sequence ID" value="AAA79408.1"/>
    <property type="molecule type" value="Genomic_DNA"/>
</dbReference>
<dbReference type="SMR" id="P50776"/>
<dbReference type="Proteomes" id="UP000009112">
    <property type="component" value="Segment"/>
</dbReference>
<dbReference type="GO" id="GO:0030430">
    <property type="term" value="C:host cell cytoplasm"/>
    <property type="evidence" value="ECO:0007669"/>
    <property type="project" value="UniProtKB-SubCell"/>
</dbReference>
<dbReference type="GO" id="GO:0042025">
    <property type="term" value="C:host cell nucleus"/>
    <property type="evidence" value="ECO:0007669"/>
    <property type="project" value="UniProtKB-SubCell"/>
</dbReference>
<dbReference type="GO" id="GO:0003677">
    <property type="term" value="F:DNA binding"/>
    <property type="evidence" value="ECO:0007669"/>
    <property type="project" value="UniProtKB-UniRule"/>
</dbReference>
<dbReference type="GO" id="GO:0008270">
    <property type="term" value="F:zinc ion binding"/>
    <property type="evidence" value="ECO:0007669"/>
    <property type="project" value="UniProtKB-KW"/>
</dbReference>
<dbReference type="GO" id="GO:0006351">
    <property type="term" value="P:DNA-templated transcription"/>
    <property type="evidence" value="ECO:0007669"/>
    <property type="project" value="UniProtKB-UniRule"/>
</dbReference>
<dbReference type="GO" id="GO:0006355">
    <property type="term" value="P:regulation of DNA-templated transcription"/>
    <property type="evidence" value="ECO:0007669"/>
    <property type="project" value="UniProtKB-UniRule"/>
</dbReference>
<dbReference type="GO" id="GO:0052150">
    <property type="term" value="P:symbiont-mediated perturbation of host apoptosis"/>
    <property type="evidence" value="ECO:0007669"/>
    <property type="project" value="UniProtKB-KW"/>
</dbReference>
<dbReference type="GO" id="GO:0039648">
    <property type="term" value="P:symbiont-mediated perturbation of host ubiquitin-like protein modification"/>
    <property type="evidence" value="ECO:0007669"/>
    <property type="project" value="UniProtKB-UniRule"/>
</dbReference>
<dbReference type="GO" id="GO:0052170">
    <property type="term" value="P:symbiont-mediated suppression of host innate immune response"/>
    <property type="evidence" value="ECO:0007669"/>
    <property type="project" value="UniProtKB-KW"/>
</dbReference>
<dbReference type="GO" id="GO:0039502">
    <property type="term" value="P:symbiont-mediated suppression of host type I interferon-mediated signaling pathway"/>
    <property type="evidence" value="ECO:0007669"/>
    <property type="project" value="UniProtKB-UniRule"/>
</dbReference>
<dbReference type="Gene3D" id="3.30.240.40">
    <property type="entry name" value="E6 early regulatory protein"/>
    <property type="match status" value="2"/>
</dbReference>
<dbReference type="HAMAP" id="MF_04006">
    <property type="entry name" value="HPV_E6"/>
    <property type="match status" value="1"/>
</dbReference>
<dbReference type="InterPro" id="IPR001334">
    <property type="entry name" value="E6"/>
</dbReference>
<dbReference type="InterPro" id="IPR038575">
    <property type="entry name" value="E6_sf"/>
</dbReference>
<dbReference type="Pfam" id="PF00518">
    <property type="entry name" value="E6"/>
    <property type="match status" value="1"/>
</dbReference>
<dbReference type="SUPFAM" id="SSF161229">
    <property type="entry name" value="E6 C-terminal domain-like"/>
    <property type="match status" value="2"/>
</dbReference>
<proteinExistence type="inferred from homology"/>
<organismHost>
    <name type="scientific">Homo sapiens</name>
    <name type="common">Human</name>
    <dbReference type="NCBI Taxonomy" id="9606"/>
</organismHost>
<gene>
    <name evidence="1" type="primary">E6</name>
</gene>
<name>VE6_HPV23</name>
<evidence type="ECO:0000255" key="1">
    <source>
        <dbReference type="HAMAP-Rule" id="MF_04006"/>
    </source>
</evidence>
<evidence type="ECO:0000305" key="2"/>
<reference key="1">
    <citation type="submission" date="1995-10" db="EMBL/GenBank/DDBJ databases">
        <authorList>
            <person name="Delius H."/>
        </authorList>
    </citation>
    <scope>NUCLEOTIDE SEQUENCE [GENOMIC DNA]</scope>
</reference>
<keyword id="KW-0010">Activator</keyword>
<keyword id="KW-0238">DNA-binding</keyword>
<keyword id="KW-0244">Early protein</keyword>
<keyword id="KW-1035">Host cytoplasm</keyword>
<keyword id="KW-1048">Host nucleus</keyword>
<keyword id="KW-0945">Host-virus interaction</keyword>
<keyword id="KW-1090">Inhibition of host innate immune response by virus</keyword>
<keyword id="KW-0479">Metal-binding</keyword>
<keyword id="KW-1119">Modulation of host cell apoptosis by virus</keyword>
<keyword id="KW-1185">Reference proteome</keyword>
<keyword id="KW-0804">Transcription</keyword>
<keyword id="KW-0805">Transcription regulation</keyword>
<keyword id="KW-0899">Viral immunoevasion</keyword>
<keyword id="KW-0862">Zinc</keyword>
<keyword id="KW-0863">Zinc-finger</keyword>